<keyword id="KW-0150">Chloroplast</keyword>
<keyword id="KW-0934">Plastid</keyword>
<keyword id="KW-0687">Ribonucleoprotein</keyword>
<keyword id="KW-0689">Ribosomal protein</keyword>
<keyword id="KW-0694">RNA-binding</keyword>
<keyword id="KW-0699">rRNA-binding</keyword>
<accession>Q332R9</accession>
<accession>Q4U4D0</accession>
<evidence type="ECO:0000250" key="1"/>
<evidence type="ECO:0000255" key="2">
    <source>
        <dbReference type="HAMAP-Rule" id="MF_00480"/>
    </source>
</evidence>
<evidence type="ECO:0000305" key="3"/>
<proteinExistence type="inferred from homology"/>
<dbReference type="EMBL" id="DQ013044">
    <property type="protein sequence ID" value="AAY57520.1"/>
    <property type="molecule type" value="Genomic_DNA"/>
</dbReference>
<dbReference type="EMBL" id="AP007232">
    <property type="protein sequence ID" value="BAE47641.1"/>
    <property type="molecule type" value="Genomic_DNA"/>
</dbReference>
<dbReference type="EMBL" id="AP007232">
    <property type="protein sequence ID" value="BAE47653.1"/>
    <property type="molecule type" value="Genomic_DNA"/>
</dbReference>
<dbReference type="EMBL" id="DQ383816">
    <property type="protein sequence ID" value="ABD47278.1"/>
    <property type="molecule type" value="Genomic_DNA"/>
</dbReference>
<dbReference type="EMBL" id="DQ383816">
    <property type="protein sequence ID" value="ABD47294.1"/>
    <property type="molecule type" value="Genomic_DNA"/>
</dbReference>
<dbReference type="SMR" id="Q332R9"/>
<dbReference type="EnsemblPlants" id="rna-gnl|WGS:NBSK|LSAT_3X14241_mrna">
    <property type="protein sequence ID" value="cds-PLY97960.1"/>
    <property type="gene ID" value="gene-LSAT_3X14241"/>
</dbReference>
<dbReference type="Gramene" id="rna-gnl|WGS:NBSK|LSAT_3X14241_mrna">
    <property type="protein sequence ID" value="cds-PLY97960.1"/>
    <property type="gene ID" value="gene-LSAT_3X14241"/>
</dbReference>
<dbReference type="KEGG" id="lsv:3772797"/>
<dbReference type="KEGG" id="lsv:3772798"/>
<dbReference type="OrthoDB" id="35139at2759"/>
<dbReference type="GO" id="GO:0009507">
    <property type="term" value="C:chloroplast"/>
    <property type="evidence" value="ECO:0007669"/>
    <property type="project" value="UniProtKB-SubCell"/>
</dbReference>
<dbReference type="GO" id="GO:0015935">
    <property type="term" value="C:small ribosomal subunit"/>
    <property type="evidence" value="ECO:0007669"/>
    <property type="project" value="InterPro"/>
</dbReference>
<dbReference type="GO" id="GO:0019843">
    <property type="term" value="F:rRNA binding"/>
    <property type="evidence" value="ECO:0007669"/>
    <property type="project" value="UniProtKB-UniRule"/>
</dbReference>
<dbReference type="GO" id="GO:0003735">
    <property type="term" value="F:structural constituent of ribosome"/>
    <property type="evidence" value="ECO:0007669"/>
    <property type="project" value="InterPro"/>
</dbReference>
<dbReference type="GO" id="GO:0006412">
    <property type="term" value="P:translation"/>
    <property type="evidence" value="ECO:0007669"/>
    <property type="project" value="UniProtKB-UniRule"/>
</dbReference>
<dbReference type="CDD" id="cd14871">
    <property type="entry name" value="uS7_Chloroplast"/>
    <property type="match status" value="1"/>
</dbReference>
<dbReference type="FunFam" id="1.10.455.10:FF:000001">
    <property type="entry name" value="30S ribosomal protein S7"/>
    <property type="match status" value="1"/>
</dbReference>
<dbReference type="Gene3D" id="1.10.455.10">
    <property type="entry name" value="Ribosomal protein S7 domain"/>
    <property type="match status" value="1"/>
</dbReference>
<dbReference type="HAMAP" id="MF_00480_B">
    <property type="entry name" value="Ribosomal_uS7_B"/>
    <property type="match status" value="1"/>
</dbReference>
<dbReference type="InterPro" id="IPR000235">
    <property type="entry name" value="Ribosomal_uS7"/>
</dbReference>
<dbReference type="InterPro" id="IPR005717">
    <property type="entry name" value="Ribosomal_uS7_bac/org-type"/>
</dbReference>
<dbReference type="InterPro" id="IPR020606">
    <property type="entry name" value="Ribosomal_uS7_CS"/>
</dbReference>
<dbReference type="InterPro" id="IPR023798">
    <property type="entry name" value="Ribosomal_uS7_dom"/>
</dbReference>
<dbReference type="InterPro" id="IPR036823">
    <property type="entry name" value="Ribosomal_uS7_dom_sf"/>
</dbReference>
<dbReference type="NCBIfam" id="TIGR01029">
    <property type="entry name" value="rpsG_bact"/>
    <property type="match status" value="1"/>
</dbReference>
<dbReference type="PANTHER" id="PTHR11205">
    <property type="entry name" value="RIBOSOMAL PROTEIN S7"/>
    <property type="match status" value="1"/>
</dbReference>
<dbReference type="Pfam" id="PF00177">
    <property type="entry name" value="Ribosomal_S7"/>
    <property type="match status" value="1"/>
</dbReference>
<dbReference type="PIRSF" id="PIRSF002122">
    <property type="entry name" value="RPS7p_RPS7a_RPS5e_RPS7o"/>
    <property type="match status" value="1"/>
</dbReference>
<dbReference type="SUPFAM" id="SSF47973">
    <property type="entry name" value="Ribosomal protein S7"/>
    <property type="match status" value="1"/>
</dbReference>
<dbReference type="PROSITE" id="PS00052">
    <property type="entry name" value="RIBOSOMAL_S7"/>
    <property type="match status" value="1"/>
</dbReference>
<feature type="chain" id="PRO_0000277044" description="Small ribosomal subunit protein uS7cz/uS7cy">
    <location>
        <begin position="1"/>
        <end position="155"/>
    </location>
</feature>
<feature type="sequence conflict" description="In Ref. 1; AAY57520." evidence="3" ref="1">
    <original>R</original>
    <variation>K</variation>
    <location>
        <position position="138"/>
    </location>
</feature>
<feature type="sequence conflict" description="In Ref. 1; AAY57520." evidence="3" ref="1">
    <original>K</original>
    <variation>R</variation>
    <location>
        <position position="143"/>
    </location>
</feature>
<feature type="sequence conflict" description="In Ref. 1; AAY57520." evidence="3" ref="1">
    <original>S</original>
    <variation>A</variation>
    <location>
        <position position="147"/>
    </location>
</feature>
<comment type="function">
    <text evidence="1">One of the primary rRNA binding proteins, it binds directly to 16S rRNA where it nucleates assembly of the head domain of the 30S subunit.</text>
</comment>
<comment type="subunit">
    <text>Part of the 30S ribosomal subunit.</text>
</comment>
<comment type="subcellular location">
    <subcellularLocation>
        <location>Plastid</location>
        <location>Chloroplast</location>
    </subcellularLocation>
</comment>
<comment type="similarity">
    <text evidence="3">Belongs to the universal ribosomal protein uS7 family.</text>
</comment>
<sequence length="155" mass="17287">MSRRGTAEEKTAKSDPIYRNRLVNMLVNRILKHGKKSLAYQIIYRAVKKIQQKTETNPLSVLRQAIHGVTPGIAVKARRVGGSTQQVPIEIGSTQGKALAIRWLLAASRKRPGRNMAFKLSSELVDAAKGSGDAIRKREETHKMAESNRAFAHFR</sequence>
<organism>
    <name type="scientific">Lactuca sativa</name>
    <name type="common">Garden lettuce</name>
    <dbReference type="NCBI Taxonomy" id="4236"/>
    <lineage>
        <taxon>Eukaryota</taxon>
        <taxon>Viridiplantae</taxon>
        <taxon>Streptophyta</taxon>
        <taxon>Embryophyta</taxon>
        <taxon>Tracheophyta</taxon>
        <taxon>Spermatophyta</taxon>
        <taxon>Magnoliopsida</taxon>
        <taxon>eudicotyledons</taxon>
        <taxon>Gunneridae</taxon>
        <taxon>Pentapetalae</taxon>
        <taxon>asterids</taxon>
        <taxon>campanulids</taxon>
        <taxon>Asterales</taxon>
        <taxon>Asteraceae</taxon>
        <taxon>Cichorioideae</taxon>
        <taxon>Cichorieae</taxon>
        <taxon>Lactucinae</taxon>
        <taxon>Lactuca</taxon>
    </lineage>
</organism>
<geneLocation type="chloroplast"/>
<gene>
    <name type="primary">rps7-A</name>
</gene>
<gene>
    <name type="primary">rps7-B</name>
</gene>
<reference key="1">
    <citation type="journal article" date="2005" name="Plant Mol. Biol.">
        <title>Stable plastid transformation in lettuce (Lactuca sativa L.).</title>
        <authorList>
            <person name="Lelivelt C.L."/>
            <person name="McCabe M.S."/>
            <person name="Newell C.A."/>
            <person name="Desnoo C.B."/>
            <person name="van Dun K.M."/>
            <person name="Birch-Machin I."/>
            <person name="Gray J.C."/>
            <person name="Mills K.H."/>
            <person name="Nugent J.M."/>
        </authorList>
    </citation>
    <scope>NUCLEOTIDE SEQUENCE [GENOMIC DNA]</scope>
</reference>
<reference key="2">
    <citation type="journal article" date="2006" name="Transgenic Res.">
        <title>Efficient and stable transformation of Lactuca sativa L. cv. Cisco (lettuce) plastids.</title>
        <authorList>
            <person name="Kanamoto H."/>
            <person name="Yamashita A."/>
            <person name="Asao H."/>
            <person name="Okumura S."/>
            <person name="Takase H."/>
            <person name="Hattori M."/>
            <person name="Yokota A."/>
            <person name="Tomizawa K."/>
        </authorList>
    </citation>
    <scope>NUCLEOTIDE SEQUENCE [LARGE SCALE GENOMIC DNA]</scope>
    <source>
        <strain>cv. Cisco</strain>
    </source>
</reference>
<reference key="3">
    <citation type="submission" date="2006-01" db="EMBL/GenBank/DDBJ databases">
        <title>A comparison of the first two published chloroplast genomes in Asteraceae: Lactuca and Helianthus.</title>
        <authorList>
            <person name="Timme R.E."/>
            <person name="Kuehl J.V."/>
            <person name="Boore J.L."/>
            <person name="Jansen R.K."/>
        </authorList>
    </citation>
    <scope>NUCLEOTIDE SEQUENCE [LARGE SCALE GENOMIC DNA]</scope>
    <source>
        <strain>cv. Salinas</strain>
    </source>
</reference>
<name>RR7_LACSA</name>
<protein>
    <recommendedName>
        <fullName evidence="2">Small ribosomal subunit protein uS7cz/uS7cy</fullName>
    </recommendedName>
    <alternativeName>
        <fullName>30S ribosomal protein S7, chloroplastic</fullName>
    </alternativeName>
</protein>